<dbReference type="EMBL" id="CP001349">
    <property type="protein sequence ID" value="ACL59503.1"/>
    <property type="molecule type" value="Genomic_DNA"/>
</dbReference>
<dbReference type="RefSeq" id="WP_015931139.1">
    <property type="nucleotide sequence ID" value="NC_011894.1"/>
</dbReference>
<dbReference type="SMR" id="B8IED1"/>
<dbReference type="STRING" id="460265.Mnod_4636"/>
<dbReference type="KEGG" id="mno:Mnod_4636"/>
<dbReference type="eggNOG" id="COG0238">
    <property type="taxonomic scope" value="Bacteria"/>
</dbReference>
<dbReference type="HOGENOM" id="CLU_148710_2_3_5"/>
<dbReference type="OrthoDB" id="9812008at2"/>
<dbReference type="Proteomes" id="UP000008207">
    <property type="component" value="Chromosome"/>
</dbReference>
<dbReference type="GO" id="GO:0022627">
    <property type="term" value="C:cytosolic small ribosomal subunit"/>
    <property type="evidence" value="ECO:0007669"/>
    <property type="project" value="TreeGrafter"/>
</dbReference>
<dbReference type="GO" id="GO:0070181">
    <property type="term" value="F:small ribosomal subunit rRNA binding"/>
    <property type="evidence" value="ECO:0007669"/>
    <property type="project" value="TreeGrafter"/>
</dbReference>
<dbReference type="GO" id="GO:0003735">
    <property type="term" value="F:structural constituent of ribosome"/>
    <property type="evidence" value="ECO:0007669"/>
    <property type="project" value="InterPro"/>
</dbReference>
<dbReference type="GO" id="GO:0006412">
    <property type="term" value="P:translation"/>
    <property type="evidence" value="ECO:0007669"/>
    <property type="project" value="UniProtKB-UniRule"/>
</dbReference>
<dbReference type="FunFam" id="4.10.640.10:FF:000006">
    <property type="entry name" value="30S ribosomal protein S18"/>
    <property type="match status" value="1"/>
</dbReference>
<dbReference type="Gene3D" id="4.10.640.10">
    <property type="entry name" value="Ribosomal protein S18"/>
    <property type="match status" value="1"/>
</dbReference>
<dbReference type="HAMAP" id="MF_00270">
    <property type="entry name" value="Ribosomal_bS18"/>
    <property type="match status" value="1"/>
</dbReference>
<dbReference type="InterPro" id="IPR001648">
    <property type="entry name" value="Ribosomal_bS18"/>
</dbReference>
<dbReference type="InterPro" id="IPR018275">
    <property type="entry name" value="Ribosomal_bS18_CS"/>
</dbReference>
<dbReference type="InterPro" id="IPR036870">
    <property type="entry name" value="Ribosomal_bS18_sf"/>
</dbReference>
<dbReference type="NCBIfam" id="TIGR00165">
    <property type="entry name" value="S18"/>
    <property type="match status" value="1"/>
</dbReference>
<dbReference type="PANTHER" id="PTHR13479">
    <property type="entry name" value="30S RIBOSOMAL PROTEIN S18"/>
    <property type="match status" value="1"/>
</dbReference>
<dbReference type="PANTHER" id="PTHR13479:SF40">
    <property type="entry name" value="SMALL RIBOSOMAL SUBUNIT PROTEIN BS18M"/>
    <property type="match status" value="1"/>
</dbReference>
<dbReference type="Pfam" id="PF01084">
    <property type="entry name" value="Ribosomal_S18"/>
    <property type="match status" value="1"/>
</dbReference>
<dbReference type="PRINTS" id="PR00974">
    <property type="entry name" value="RIBOSOMALS18"/>
</dbReference>
<dbReference type="SUPFAM" id="SSF46911">
    <property type="entry name" value="Ribosomal protein S18"/>
    <property type="match status" value="1"/>
</dbReference>
<dbReference type="PROSITE" id="PS00057">
    <property type="entry name" value="RIBOSOMAL_S18"/>
    <property type="match status" value="1"/>
</dbReference>
<protein>
    <recommendedName>
        <fullName evidence="1">Small ribosomal subunit protein bS18</fullName>
    </recommendedName>
    <alternativeName>
        <fullName evidence="2">30S ribosomal protein S18</fullName>
    </alternativeName>
</protein>
<organism>
    <name type="scientific">Methylobacterium nodulans (strain LMG 21967 / CNCM I-2342 / ORS 2060)</name>
    <dbReference type="NCBI Taxonomy" id="460265"/>
    <lineage>
        <taxon>Bacteria</taxon>
        <taxon>Pseudomonadati</taxon>
        <taxon>Pseudomonadota</taxon>
        <taxon>Alphaproteobacteria</taxon>
        <taxon>Hyphomicrobiales</taxon>
        <taxon>Methylobacteriaceae</taxon>
        <taxon>Methylobacterium</taxon>
    </lineage>
</organism>
<comment type="function">
    <text evidence="1">Binds as a heterodimer with protein bS6 to the central domain of the 16S rRNA, where it helps stabilize the platform of the 30S subunit.</text>
</comment>
<comment type="subunit">
    <text evidence="1">Part of the 30S ribosomal subunit. Forms a tight heterodimer with protein bS6.</text>
</comment>
<comment type="similarity">
    <text evidence="1">Belongs to the bacterial ribosomal protein bS18 family.</text>
</comment>
<sequence>MAFGAGGGGRRPFFRRRKTCPFSGPNAPKIDYKDVKLLSRYVSERGKIVPSRITAVSAKKQRELAQAIKRARFLGFLPYVIR</sequence>
<reference key="1">
    <citation type="submission" date="2009-01" db="EMBL/GenBank/DDBJ databases">
        <title>Complete sequence of chromosome of Methylobacterium nodulans ORS 2060.</title>
        <authorList>
            <consortium name="US DOE Joint Genome Institute"/>
            <person name="Lucas S."/>
            <person name="Copeland A."/>
            <person name="Lapidus A."/>
            <person name="Glavina del Rio T."/>
            <person name="Dalin E."/>
            <person name="Tice H."/>
            <person name="Bruce D."/>
            <person name="Goodwin L."/>
            <person name="Pitluck S."/>
            <person name="Sims D."/>
            <person name="Brettin T."/>
            <person name="Detter J.C."/>
            <person name="Han C."/>
            <person name="Larimer F."/>
            <person name="Land M."/>
            <person name="Hauser L."/>
            <person name="Kyrpides N."/>
            <person name="Ivanova N."/>
            <person name="Marx C.J."/>
            <person name="Richardson P."/>
        </authorList>
    </citation>
    <scope>NUCLEOTIDE SEQUENCE [LARGE SCALE GENOMIC DNA]</scope>
    <source>
        <strain>LMG 21967 / CNCM I-2342 / ORS 2060</strain>
    </source>
</reference>
<feature type="chain" id="PRO_1000196521" description="Small ribosomal subunit protein bS18">
    <location>
        <begin position="1"/>
        <end position="82"/>
    </location>
</feature>
<keyword id="KW-1185">Reference proteome</keyword>
<keyword id="KW-0687">Ribonucleoprotein</keyword>
<keyword id="KW-0689">Ribosomal protein</keyword>
<keyword id="KW-0694">RNA-binding</keyword>
<keyword id="KW-0699">rRNA-binding</keyword>
<name>RS18_METNO</name>
<accession>B8IED1</accession>
<proteinExistence type="inferred from homology"/>
<evidence type="ECO:0000255" key="1">
    <source>
        <dbReference type="HAMAP-Rule" id="MF_00270"/>
    </source>
</evidence>
<evidence type="ECO:0000305" key="2"/>
<gene>
    <name evidence="1" type="primary">rpsR</name>
    <name type="ordered locus">Mnod_4636</name>
</gene>